<accession>Q0A7A0</accession>
<organism>
    <name type="scientific">Alkalilimnicola ehrlichii (strain ATCC BAA-1101 / DSM 17681 / MLHE-1)</name>
    <dbReference type="NCBI Taxonomy" id="187272"/>
    <lineage>
        <taxon>Bacteria</taxon>
        <taxon>Pseudomonadati</taxon>
        <taxon>Pseudomonadota</taxon>
        <taxon>Gammaproteobacteria</taxon>
        <taxon>Chromatiales</taxon>
        <taxon>Ectothiorhodospiraceae</taxon>
        <taxon>Alkalilimnicola</taxon>
    </lineage>
</organism>
<protein>
    <recommendedName>
        <fullName evidence="1">Small ribosomal subunit protein uS15</fullName>
    </recommendedName>
    <alternativeName>
        <fullName evidence="3">30S ribosomal protein S15</fullName>
    </alternativeName>
</protein>
<gene>
    <name evidence="1" type="primary">rpsO</name>
    <name type="ordered locus">Mlg_1945</name>
</gene>
<comment type="function">
    <text evidence="1">One of the primary rRNA binding proteins, it binds directly to 16S rRNA where it helps nucleate assembly of the platform of the 30S subunit by binding and bridging several RNA helices of the 16S rRNA.</text>
</comment>
<comment type="function">
    <text evidence="1">Forms an intersubunit bridge (bridge B4) with the 23S rRNA of the 50S subunit in the ribosome.</text>
</comment>
<comment type="subunit">
    <text evidence="1">Part of the 30S ribosomal subunit. Forms a bridge to the 50S subunit in the 70S ribosome, contacting the 23S rRNA.</text>
</comment>
<comment type="similarity">
    <text evidence="1">Belongs to the universal ribosomal protein uS15 family.</text>
</comment>
<name>RS15_ALKEH</name>
<keyword id="KW-1185">Reference proteome</keyword>
<keyword id="KW-0687">Ribonucleoprotein</keyword>
<keyword id="KW-0689">Ribosomal protein</keyword>
<keyword id="KW-0694">RNA-binding</keyword>
<keyword id="KW-0699">rRNA-binding</keyword>
<sequence>MSLSAEQKGEIVKKHARTASDTGSPEVQVALLTARIQHLSGHFAEHKQDHHSRQGLLKLVSQRRKLLDYLKRKDRQRYLDLIENLGLRK</sequence>
<reference key="1">
    <citation type="submission" date="2006-08" db="EMBL/GenBank/DDBJ databases">
        <title>Complete sequence of Alkalilimnicola ehrilichei MLHE-1.</title>
        <authorList>
            <person name="Copeland A."/>
            <person name="Lucas S."/>
            <person name="Lapidus A."/>
            <person name="Barry K."/>
            <person name="Detter J.C."/>
            <person name="Glavina del Rio T."/>
            <person name="Hammon N."/>
            <person name="Israni S."/>
            <person name="Dalin E."/>
            <person name="Tice H."/>
            <person name="Pitluck S."/>
            <person name="Sims D."/>
            <person name="Brettin T."/>
            <person name="Bruce D."/>
            <person name="Han C."/>
            <person name="Tapia R."/>
            <person name="Gilna P."/>
            <person name="Schmutz J."/>
            <person name="Larimer F."/>
            <person name="Land M."/>
            <person name="Hauser L."/>
            <person name="Kyrpides N."/>
            <person name="Mikhailova N."/>
            <person name="Oremland R.S."/>
            <person name="Hoeft S.E."/>
            <person name="Switzer-Blum J."/>
            <person name="Kulp T."/>
            <person name="King G."/>
            <person name="Tabita R."/>
            <person name="Witte B."/>
            <person name="Santini J.M."/>
            <person name="Basu P."/>
            <person name="Hollibaugh J.T."/>
            <person name="Xie G."/>
            <person name="Stolz J.F."/>
            <person name="Richardson P."/>
        </authorList>
    </citation>
    <scope>NUCLEOTIDE SEQUENCE [LARGE SCALE GENOMIC DNA]</scope>
    <source>
        <strain>ATCC BAA-1101 / DSM 17681 / MLHE-1</strain>
    </source>
</reference>
<evidence type="ECO:0000255" key="1">
    <source>
        <dbReference type="HAMAP-Rule" id="MF_01343"/>
    </source>
</evidence>
<evidence type="ECO:0000256" key="2">
    <source>
        <dbReference type="SAM" id="MobiDB-lite"/>
    </source>
</evidence>
<evidence type="ECO:0000305" key="3"/>
<dbReference type="EMBL" id="CP000453">
    <property type="protein sequence ID" value="ABI57287.1"/>
    <property type="molecule type" value="Genomic_DNA"/>
</dbReference>
<dbReference type="RefSeq" id="WP_011629681.1">
    <property type="nucleotide sequence ID" value="NC_008340.1"/>
</dbReference>
<dbReference type="SMR" id="Q0A7A0"/>
<dbReference type="KEGG" id="aeh:Mlg_1945"/>
<dbReference type="eggNOG" id="COG0184">
    <property type="taxonomic scope" value="Bacteria"/>
</dbReference>
<dbReference type="HOGENOM" id="CLU_148518_0_0_6"/>
<dbReference type="OrthoDB" id="9799262at2"/>
<dbReference type="Proteomes" id="UP000001962">
    <property type="component" value="Chromosome"/>
</dbReference>
<dbReference type="GO" id="GO:0022627">
    <property type="term" value="C:cytosolic small ribosomal subunit"/>
    <property type="evidence" value="ECO:0007669"/>
    <property type="project" value="TreeGrafter"/>
</dbReference>
<dbReference type="GO" id="GO:0019843">
    <property type="term" value="F:rRNA binding"/>
    <property type="evidence" value="ECO:0007669"/>
    <property type="project" value="UniProtKB-UniRule"/>
</dbReference>
<dbReference type="GO" id="GO:0003735">
    <property type="term" value="F:structural constituent of ribosome"/>
    <property type="evidence" value="ECO:0007669"/>
    <property type="project" value="InterPro"/>
</dbReference>
<dbReference type="GO" id="GO:0006412">
    <property type="term" value="P:translation"/>
    <property type="evidence" value="ECO:0007669"/>
    <property type="project" value="UniProtKB-UniRule"/>
</dbReference>
<dbReference type="CDD" id="cd00353">
    <property type="entry name" value="Ribosomal_S15p_S13e"/>
    <property type="match status" value="1"/>
</dbReference>
<dbReference type="FunFam" id="1.10.287.10:FF:000002">
    <property type="entry name" value="30S ribosomal protein S15"/>
    <property type="match status" value="1"/>
</dbReference>
<dbReference type="Gene3D" id="6.10.250.3130">
    <property type="match status" value="1"/>
</dbReference>
<dbReference type="Gene3D" id="1.10.287.10">
    <property type="entry name" value="S15/NS1, RNA-binding"/>
    <property type="match status" value="1"/>
</dbReference>
<dbReference type="HAMAP" id="MF_01343_B">
    <property type="entry name" value="Ribosomal_uS15_B"/>
    <property type="match status" value="1"/>
</dbReference>
<dbReference type="InterPro" id="IPR000589">
    <property type="entry name" value="Ribosomal_uS15"/>
</dbReference>
<dbReference type="InterPro" id="IPR005290">
    <property type="entry name" value="Ribosomal_uS15_bac-type"/>
</dbReference>
<dbReference type="InterPro" id="IPR009068">
    <property type="entry name" value="uS15_NS1_RNA-bd_sf"/>
</dbReference>
<dbReference type="NCBIfam" id="TIGR00952">
    <property type="entry name" value="S15_bact"/>
    <property type="match status" value="1"/>
</dbReference>
<dbReference type="PANTHER" id="PTHR23321">
    <property type="entry name" value="RIBOSOMAL PROTEIN S15, BACTERIAL AND ORGANELLAR"/>
    <property type="match status" value="1"/>
</dbReference>
<dbReference type="PANTHER" id="PTHR23321:SF26">
    <property type="entry name" value="SMALL RIBOSOMAL SUBUNIT PROTEIN US15M"/>
    <property type="match status" value="1"/>
</dbReference>
<dbReference type="Pfam" id="PF00312">
    <property type="entry name" value="Ribosomal_S15"/>
    <property type="match status" value="1"/>
</dbReference>
<dbReference type="SMART" id="SM01387">
    <property type="entry name" value="Ribosomal_S15"/>
    <property type="match status" value="1"/>
</dbReference>
<dbReference type="SUPFAM" id="SSF47060">
    <property type="entry name" value="S15/NS1 RNA-binding domain"/>
    <property type="match status" value="1"/>
</dbReference>
<dbReference type="PROSITE" id="PS00362">
    <property type="entry name" value="RIBOSOMAL_S15"/>
    <property type="match status" value="1"/>
</dbReference>
<proteinExistence type="inferred from homology"/>
<feature type="chain" id="PRO_1000054744" description="Small ribosomal subunit protein uS15">
    <location>
        <begin position="1"/>
        <end position="89"/>
    </location>
</feature>
<feature type="region of interest" description="Disordered" evidence="2">
    <location>
        <begin position="1"/>
        <end position="25"/>
    </location>
</feature>